<gene>
    <name evidence="1" type="primary">rpsQ</name>
    <name type="ordered locus">BruAb1_1229</name>
</gene>
<feature type="chain" id="PRO_0000233441" description="Small ribosomal subunit protein uS17">
    <location>
        <begin position="1"/>
        <end position="80"/>
    </location>
</feature>
<dbReference type="EMBL" id="AE017223">
    <property type="protein sequence ID" value="AAX74567.1"/>
    <property type="molecule type" value="Genomic_DNA"/>
</dbReference>
<dbReference type="RefSeq" id="WP_002964353.1">
    <property type="nucleotide sequence ID" value="NC_006932.1"/>
</dbReference>
<dbReference type="SMR" id="Q57CR7"/>
<dbReference type="EnsemblBacteria" id="AAX74567">
    <property type="protein sequence ID" value="AAX74567"/>
    <property type="gene ID" value="BruAb1_1229"/>
</dbReference>
<dbReference type="GeneID" id="97533533"/>
<dbReference type="KEGG" id="bmb:BruAb1_1229"/>
<dbReference type="HOGENOM" id="CLU_073626_1_1_5"/>
<dbReference type="Proteomes" id="UP000000540">
    <property type="component" value="Chromosome I"/>
</dbReference>
<dbReference type="GO" id="GO:0022627">
    <property type="term" value="C:cytosolic small ribosomal subunit"/>
    <property type="evidence" value="ECO:0007669"/>
    <property type="project" value="TreeGrafter"/>
</dbReference>
<dbReference type="GO" id="GO:0019843">
    <property type="term" value="F:rRNA binding"/>
    <property type="evidence" value="ECO:0007669"/>
    <property type="project" value="UniProtKB-UniRule"/>
</dbReference>
<dbReference type="GO" id="GO:0003735">
    <property type="term" value="F:structural constituent of ribosome"/>
    <property type="evidence" value="ECO:0007669"/>
    <property type="project" value="InterPro"/>
</dbReference>
<dbReference type="GO" id="GO:0006412">
    <property type="term" value="P:translation"/>
    <property type="evidence" value="ECO:0007669"/>
    <property type="project" value="UniProtKB-UniRule"/>
</dbReference>
<dbReference type="CDD" id="cd00364">
    <property type="entry name" value="Ribosomal_uS17"/>
    <property type="match status" value="1"/>
</dbReference>
<dbReference type="Gene3D" id="2.40.50.140">
    <property type="entry name" value="Nucleic acid-binding proteins"/>
    <property type="match status" value="1"/>
</dbReference>
<dbReference type="HAMAP" id="MF_01345_B">
    <property type="entry name" value="Ribosomal_uS17_B"/>
    <property type="match status" value="1"/>
</dbReference>
<dbReference type="InterPro" id="IPR012340">
    <property type="entry name" value="NA-bd_OB-fold"/>
</dbReference>
<dbReference type="InterPro" id="IPR000266">
    <property type="entry name" value="Ribosomal_uS17"/>
</dbReference>
<dbReference type="InterPro" id="IPR019984">
    <property type="entry name" value="Ribosomal_uS17_bact/chlr"/>
</dbReference>
<dbReference type="NCBIfam" id="NF004123">
    <property type="entry name" value="PRK05610.1"/>
    <property type="match status" value="1"/>
</dbReference>
<dbReference type="NCBIfam" id="TIGR03635">
    <property type="entry name" value="uS17_bact"/>
    <property type="match status" value="1"/>
</dbReference>
<dbReference type="PANTHER" id="PTHR10744">
    <property type="entry name" value="40S RIBOSOMAL PROTEIN S11 FAMILY MEMBER"/>
    <property type="match status" value="1"/>
</dbReference>
<dbReference type="PANTHER" id="PTHR10744:SF1">
    <property type="entry name" value="SMALL RIBOSOMAL SUBUNIT PROTEIN US17M"/>
    <property type="match status" value="1"/>
</dbReference>
<dbReference type="Pfam" id="PF00366">
    <property type="entry name" value="Ribosomal_S17"/>
    <property type="match status" value="1"/>
</dbReference>
<dbReference type="PRINTS" id="PR00973">
    <property type="entry name" value="RIBOSOMALS17"/>
</dbReference>
<dbReference type="SUPFAM" id="SSF50249">
    <property type="entry name" value="Nucleic acid-binding proteins"/>
    <property type="match status" value="1"/>
</dbReference>
<accession>Q57CR7</accession>
<organism>
    <name type="scientific">Brucella abortus biovar 1 (strain 9-941)</name>
    <dbReference type="NCBI Taxonomy" id="262698"/>
    <lineage>
        <taxon>Bacteria</taxon>
        <taxon>Pseudomonadati</taxon>
        <taxon>Pseudomonadota</taxon>
        <taxon>Alphaproteobacteria</taxon>
        <taxon>Hyphomicrobiales</taxon>
        <taxon>Brucellaceae</taxon>
        <taxon>Brucella/Ochrobactrum group</taxon>
        <taxon>Brucella</taxon>
    </lineage>
</organism>
<comment type="function">
    <text evidence="1">One of the primary rRNA binding proteins, it binds specifically to the 5'-end of 16S ribosomal RNA.</text>
</comment>
<comment type="subunit">
    <text evidence="1">Part of the 30S ribosomal subunit.</text>
</comment>
<comment type="similarity">
    <text evidence="1">Belongs to the universal ribosomal protein uS17 family.</text>
</comment>
<evidence type="ECO:0000255" key="1">
    <source>
        <dbReference type="HAMAP-Rule" id="MF_01345"/>
    </source>
</evidence>
<evidence type="ECO:0000305" key="2"/>
<proteinExistence type="inferred from homology"/>
<protein>
    <recommendedName>
        <fullName evidence="1">Small ribosomal subunit protein uS17</fullName>
    </recommendedName>
    <alternativeName>
        <fullName evidence="2">30S ribosomal protein S17</fullName>
    </alternativeName>
</protein>
<name>RS17_BRUAB</name>
<reference key="1">
    <citation type="journal article" date="2005" name="J. Bacteriol.">
        <title>Completion of the genome sequence of Brucella abortus and comparison to the highly similar genomes of Brucella melitensis and Brucella suis.</title>
        <authorList>
            <person name="Halling S.M."/>
            <person name="Peterson-Burch B.D."/>
            <person name="Bricker B.J."/>
            <person name="Zuerner R.L."/>
            <person name="Qing Z."/>
            <person name="Li L.-L."/>
            <person name="Kapur V."/>
            <person name="Alt D.P."/>
            <person name="Olsen S.C."/>
        </authorList>
    </citation>
    <scope>NUCLEOTIDE SEQUENCE [LARGE SCALE GENOMIC DNA]</scope>
    <source>
        <strain>9-941</strain>
    </source>
</reference>
<keyword id="KW-0687">Ribonucleoprotein</keyword>
<keyword id="KW-0689">Ribosomal protein</keyword>
<keyword id="KW-0694">RNA-binding</keyword>
<keyword id="KW-0699">rRNA-binding</keyword>
<sequence>MPKRVLQGVVVSDKNDKTVVVKVERRYSHPLLQKTVRQSKKYKAHDENNQFKVGDFVSIQESAPISKDKRWVVLTSEAAG</sequence>